<reference key="1">
    <citation type="journal article" date="2000" name="Nature">
        <title>Sequence and analysis of chromosome 1 of the plant Arabidopsis thaliana.</title>
        <authorList>
            <person name="Theologis A."/>
            <person name="Ecker J.R."/>
            <person name="Palm C.J."/>
            <person name="Federspiel N.A."/>
            <person name="Kaul S."/>
            <person name="White O."/>
            <person name="Alonso J."/>
            <person name="Altafi H."/>
            <person name="Araujo R."/>
            <person name="Bowman C.L."/>
            <person name="Brooks S.Y."/>
            <person name="Buehler E."/>
            <person name="Chan A."/>
            <person name="Chao Q."/>
            <person name="Chen H."/>
            <person name="Cheuk R.F."/>
            <person name="Chin C.W."/>
            <person name="Chung M.K."/>
            <person name="Conn L."/>
            <person name="Conway A.B."/>
            <person name="Conway A.R."/>
            <person name="Creasy T.H."/>
            <person name="Dewar K."/>
            <person name="Dunn P."/>
            <person name="Etgu P."/>
            <person name="Feldblyum T.V."/>
            <person name="Feng J.-D."/>
            <person name="Fong B."/>
            <person name="Fujii C.Y."/>
            <person name="Gill J.E."/>
            <person name="Goldsmith A.D."/>
            <person name="Haas B."/>
            <person name="Hansen N.F."/>
            <person name="Hughes B."/>
            <person name="Huizar L."/>
            <person name="Hunter J.L."/>
            <person name="Jenkins J."/>
            <person name="Johnson-Hopson C."/>
            <person name="Khan S."/>
            <person name="Khaykin E."/>
            <person name="Kim C.J."/>
            <person name="Koo H.L."/>
            <person name="Kremenetskaia I."/>
            <person name="Kurtz D.B."/>
            <person name="Kwan A."/>
            <person name="Lam B."/>
            <person name="Langin-Hooper S."/>
            <person name="Lee A."/>
            <person name="Lee J.M."/>
            <person name="Lenz C.A."/>
            <person name="Li J.H."/>
            <person name="Li Y.-P."/>
            <person name="Lin X."/>
            <person name="Liu S.X."/>
            <person name="Liu Z.A."/>
            <person name="Luros J.S."/>
            <person name="Maiti R."/>
            <person name="Marziali A."/>
            <person name="Militscher J."/>
            <person name="Miranda M."/>
            <person name="Nguyen M."/>
            <person name="Nierman W.C."/>
            <person name="Osborne B.I."/>
            <person name="Pai G."/>
            <person name="Peterson J."/>
            <person name="Pham P.K."/>
            <person name="Rizzo M."/>
            <person name="Rooney T."/>
            <person name="Rowley D."/>
            <person name="Sakano H."/>
            <person name="Salzberg S.L."/>
            <person name="Schwartz J.R."/>
            <person name="Shinn P."/>
            <person name="Southwick A.M."/>
            <person name="Sun H."/>
            <person name="Tallon L.J."/>
            <person name="Tambunga G."/>
            <person name="Toriumi M.J."/>
            <person name="Town C.D."/>
            <person name="Utterback T."/>
            <person name="Van Aken S."/>
            <person name="Vaysberg M."/>
            <person name="Vysotskaia V.S."/>
            <person name="Walker M."/>
            <person name="Wu D."/>
            <person name="Yu G."/>
            <person name="Fraser C.M."/>
            <person name="Venter J.C."/>
            <person name="Davis R.W."/>
        </authorList>
    </citation>
    <scope>NUCLEOTIDE SEQUENCE [LARGE SCALE GENOMIC DNA]</scope>
    <source>
        <strain>cv. Columbia</strain>
    </source>
</reference>
<reference key="2">
    <citation type="journal article" date="2017" name="Plant J.">
        <title>Araport11: a complete reannotation of the Arabidopsis thaliana reference genome.</title>
        <authorList>
            <person name="Cheng C.Y."/>
            <person name="Krishnakumar V."/>
            <person name="Chan A.P."/>
            <person name="Thibaud-Nissen F."/>
            <person name="Schobel S."/>
            <person name="Town C.D."/>
        </authorList>
    </citation>
    <scope>GENOME REANNOTATION</scope>
    <source>
        <strain>cv. Columbia</strain>
    </source>
</reference>
<reference key="3">
    <citation type="journal article" date="2006" name="Plant Biotechnol. J.">
        <title>Simultaneous high-throughput recombinational cloning of open reading frames in closed and open configurations.</title>
        <authorList>
            <person name="Underwood B.A."/>
            <person name="Vanderhaeghen R."/>
            <person name="Whitford R."/>
            <person name="Town C.D."/>
            <person name="Hilson P."/>
        </authorList>
    </citation>
    <scope>NUCLEOTIDE SEQUENCE [LARGE SCALE MRNA]</scope>
    <source>
        <strain>cv. Columbia</strain>
    </source>
</reference>
<reference key="4">
    <citation type="journal article" date="2014" name="Plant Physiol.">
        <title>Functional and evolutionary analysis of the CASPARIAN STRIP MEMBRANE DOMAIN PROTEIN family.</title>
        <authorList>
            <person name="Roppolo D."/>
            <person name="Boeckmann B."/>
            <person name="Pfister A."/>
            <person name="Boutet E."/>
            <person name="Rubio M.C."/>
            <person name="Denervaud-Tendon V."/>
            <person name="Vermeer J.E."/>
            <person name="Gheyselinck J."/>
            <person name="Xenarios I."/>
            <person name="Geldner N."/>
        </authorList>
    </citation>
    <scope>GENE FAMILY</scope>
    <scope>NOMENCLATURE</scope>
</reference>
<protein>
    <recommendedName>
        <fullName>CASP-like protein 3A2</fullName>
        <shortName>AtCASPL3A2</shortName>
    </recommendedName>
</protein>
<keyword id="KW-1003">Cell membrane</keyword>
<keyword id="KW-0325">Glycoprotein</keyword>
<keyword id="KW-0472">Membrane</keyword>
<keyword id="KW-1185">Reference proteome</keyword>
<keyword id="KW-0812">Transmembrane</keyword>
<keyword id="KW-1133">Transmembrane helix</keyword>
<sequence length="187" mass="20011">MTSNGEGGEVVAKRRRKGIKELVQVALRGGCLAASATAMAVMLTATEEGVADIYGFKLTLSSNWSFSPSYQYVVGACAGTVLYSLLQLCLGVYRLVTGSPITPSRFQAWLCFTSDQLFCYLMMSAGSAGSGVTNLNKTGIRHTPLPDFCKTLSSFCNHVALSLLLVFLSFIFLASSSFFTVLVLSTP</sequence>
<evidence type="ECO:0000250" key="1"/>
<evidence type="ECO:0000255" key="2"/>
<evidence type="ECO:0000305" key="3"/>
<dbReference type="EMBL" id="AC010793">
    <property type="protein sequence ID" value="AAF68111.1"/>
    <property type="status" value="ALT_SEQ"/>
    <property type="molecule type" value="Genomic_DNA"/>
</dbReference>
<dbReference type="EMBL" id="CP002684">
    <property type="protein sequence ID" value="AEE36297.1"/>
    <property type="molecule type" value="Genomic_DNA"/>
</dbReference>
<dbReference type="EMBL" id="DQ446445">
    <property type="protein sequence ID" value="ABE65786.1"/>
    <property type="molecule type" value="mRNA"/>
</dbReference>
<dbReference type="RefSeq" id="NP_178096.2">
    <property type="nucleotide sequence ID" value="NM_106627.3"/>
</dbReference>
<dbReference type="SMR" id="Q1PFB8"/>
<dbReference type="BioGRID" id="29535">
    <property type="interactions" value="16"/>
</dbReference>
<dbReference type="IntAct" id="Q1PFB8">
    <property type="interactions" value="16"/>
</dbReference>
<dbReference type="STRING" id="3702.Q1PFB8"/>
<dbReference type="GlyGen" id="Q1PFB8">
    <property type="glycosylation" value="3 sites"/>
</dbReference>
<dbReference type="PaxDb" id="3702-AT1G79780.1"/>
<dbReference type="EnsemblPlants" id="AT1G79780.1">
    <property type="protein sequence ID" value="AT1G79780.1"/>
    <property type="gene ID" value="AT1G79780"/>
</dbReference>
<dbReference type="GeneID" id="844317"/>
<dbReference type="Gramene" id="AT1G79780.1">
    <property type="protein sequence ID" value="AT1G79780.1"/>
    <property type="gene ID" value="AT1G79780"/>
</dbReference>
<dbReference type="KEGG" id="ath:AT1G79780"/>
<dbReference type="Araport" id="AT1G79780"/>
<dbReference type="TAIR" id="AT1G79780">
    <property type="gene designation" value="CASPL3A2"/>
</dbReference>
<dbReference type="eggNOG" id="ENOG502RN9B">
    <property type="taxonomic scope" value="Eukaryota"/>
</dbReference>
<dbReference type="HOGENOM" id="CLU_114729_0_0_1"/>
<dbReference type="InParanoid" id="Q1PFB8"/>
<dbReference type="OMA" id="KWSFSPS"/>
<dbReference type="PhylomeDB" id="Q1PFB8"/>
<dbReference type="PRO" id="PR:Q1PFB8"/>
<dbReference type="Proteomes" id="UP000006548">
    <property type="component" value="Chromosome 1"/>
</dbReference>
<dbReference type="ExpressionAtlas" id="Q1PFB8">
    <property type="expression patterns" value="baseline and differential"/>
</dbReference>
<dbReference type="GO" id="GO:0005886">
    <property type="term" value="C:plasma membrane"/>
    <property type="evidence" value="ECO:0007669"/>
    <property type="project" value="UniProtKB-SubCell"/>
</dbReference>
<dbReference type="InterPro" id="IPR006459">
    <property type="entry name" value="CASP/CASPL"/>
</dbReference>
<dbReference type="InterPro" id="IPR006702">
    <property type="entry name" value="CASP_dom"/>
</dbReference>
<dbReference type="NCBIfam" id="TIGR01569">
    <property type="entry name" value="A_tha_TIGR01569"/>
    <property type="match status" value="1"/>
</dbReference>
<dbReference type="PANTHER" id="PTHR33573:SF39">
    <property type="entry name" value="CASP-LIKE PROTEIN 3A2"/>
    <property type="match status" value="1"/>
</dbReference>
<dbReference type="PANTHER" id="PTHR33573">
    <property type="entry name" value="CASP-LIKE PROTEIN 4A4"/>
    <property type="match status" value="1"/>
</dbReference>
<dbReference type="Pfam" id="PF04535">
    <property type="entry name" value="CASP_dom"/>
    <property type="match status" value="1"/>
</dbReference>
<proteinExistence type="evidence at transcript level"/>
<organism>
    <name type="scientific">Arabidopsis thaliana</name>
    <name type="common">Mouse-ear cress</name>
    <dbReference type="NCBI Taxonomy" id="3702"/>
    <lineage>
        <taxon>Eukaryota</taxon>
        <taxon>Viridiplantae</taxon>
        <taxon>Streptophyta</taxon>
        <taxon>Embryophyta</taxon>
        <taxon>Tracheophyta</taxon>
        <taxon>Spermatophyta</taxon>
        <taxon>Magnoliopsida</taxon>
        <taxon>eudicotyledons</taxon>
        <taxon>Gunneridae</taxon>
        <taxon>Pentapetalae</taxon>
        <taxon>rosids</taxon>
        <taxon>malvids</taxon>
        <taxon>Brassicales</taxon>
        <taxon>Brassicaceae</taxon>
        <taxon>Camelineae</taxon>
        <taxon>Arabidopsis</taxon>
    </lineage>
</organism>
<comment type="subunit">
    <text evidence="1">Homodimer and heterodimers.</text>
</comment>
<comment type="subcellular location">
    <subcellularLocation>
        <location evidence="1">Cell membrane</location>
        <topology evidence="1">Multi-pass membrane protein</topology>
    </subcellularLocation>
</comment>
<comment type="similarity">
    <text evidence="3">Belongs to the Casparian strip membrane proteins (CASP) family.</text>
</comment>
<comment type="sequence caution" evidence="3">
    <conflict type="erroneous gene model prediction">
        <sequence resource="EMBL-CDS" id="AAF68111"/>
    </conflict>
    <text>The predicted gene has been split into 2 genes: At1g79770 and At1g79780.</text>
</comment>
<name>CSPL5_ARATH</name>
<accession>Q1PFB8</accession>
<accession>Q3E6P5</accession>
<accession>Q9MA01</accession>
<feature type="chain" id="PRO_0000308655" description="CASP-like protein 3A2">
    <location>
        <begin position="1"/>
        <end position="187"/>
    </location>
</feature>
<feature type="topological domain" description="Cytoplasmic" evidence="2">
    <location>
        <begin position="1"/>
        <end position="24"/>
    </location>
</feature>
<feature type="transmembrane region" description="Helical" evidence="2">
    <location>
        <begin position="25"/>
        <end position="45"/>
    </location>
</feature>
<feature type="topological domain" description="Extracellular" evidence="2">
    <location>
        <begin position="46"/>
        <end position="71"/>
    </location>
</feature>
<feature type="transmembrane region" description="Helical" evidence="2">
    <location>
        <begin position="72"/>
        <end position="92"/>
    </location>
</feature>
<feature type="topological domain" description="Cytoplasmic" evidence="2">
    <location>
        <begin position="93"/>
        <end position="107"/>
    </location>
</feature>
<feature type="transmembrane region" description="Helical" evidence="2">
    <location>
        <begin position="108"/>
        <end position="128"/>
    </location>
</feature>
<feature type="topological domain" description="Extracellular" evidence="2">
    <location>
        <begin position="129"/>
        <end position="162"/>
    </location>
</feature>
<feature type="transmembrane region" description="Helical" evidence="2">
    <location>
        <begin position="163"/>
        <end position="183"/>
    </location>
</feature>
<feature type="topological domain" description="Cytoplasmic" evidence="2">
    <location>
        <begin position="184"/>
        <end position="187"/>
    </location>
</feature>
<feature type="glycosylation site" description="N-linked (GlcNAc...) asparagine" evidence="2">
    <location>
        <position position="63"/>
    </location>
</feature>
<feature type="glycosylation site" description="N-linked (GlcNAc...) asparagine" evidence="2">
    <location>
        <position position="136"/>
    </location>
</feature>
<gene>
    <name type="ordered locus">At1g79780</name>
    <name type="ORF">F20B17.26</name>
</gene>